<organism>
    <name type="scientific">Polaromonas sp. (strain JS666 / ATCC BAA-500)</name>
    <dbReference type="NCBI Taxonomy" id="296591"/>
    <lineage>
        <taxon>Bacteria</taxon>
        <taxon>Pseudomonadati</taxon>
        <taxon>Pseudomonadota</taxon>
        <taxon>Betaproteobacteria</taxon>
        <taxon>Burkholderiales</taxon>
        <taxon>Comamonadaceae</taxon>
        <taxon>Polaromonas</taxon>
    </lineage>
</organism>
<protein>
    <recommendedName>
        <fullName evidence="1">Large ribosomal subunit protein uL23</fullName>
    </recommendedName>
    <alternativeName>
        <fullName evidence="2">50S ribosomal protein L23</fullName>
    </alternativeName>
</protein>
<gene>
    <name evidence="1" type="primary">rplW</name>
    <name type="ordered locus">Bpro_0258</name>
</gene>
<comment type="function">
    <text evidence="1">One of the early assembly proteins it binds 23S rRNA. One of the proteins that surrounds the polypeptide exit tunnel on the outside of the ribosome. Forms the main docking site for trigger factor binding to the ribosome.</text>
</comment>
<comment type="subunit">
    <text evidence="1">Part of the 50S ribosomal subunit. Contacts protein L29, and trigger factor when it is bound to the ribosome.</text>
</comment>
<comment type="similarity">
    <text evidence="1">Belongs to the universal ribosomal protein uL23 family.</text>
</comment>
<keyword id="KW-1185">Reference proteome</keyword>
<keyword id="KW-0687">Ribonucleoprotein</keyword>
<keyword id="KW-0689">Ribosomal protein</keyword>
<keyword id="KW-0694">RNA-binding</keyword>
<keyword id="KW-0699">rRNA-binding</keyword>
<name>RL23_POLSJ</name>
<proteinExistence type="inferred from homology"/>
<accession>Q12GW9</accession>
<dbReference type="EMBL" id="CP000316">
    <property type="protein sequence ID" value="ABE42223.1"/>
    <property type="molecule type" value="Genomic_DNA"/>
</dbReference>
<dbReference type="RefSeq" id="WP_011481231.1">
    <property type="nucleotide sequence ID" value="NC_007948.1"/>
</dbReference>
<dbReference type="SMR" id="Q12GW9"/>
<dbReference type="STRING" id="296591.Bpro_0258"/>
<dbReference type="KEGG" id="pol:Bpro_0258"/>
<dbReference type="eggNOG" id="COG0089">
    <property type="taxonomic scope" value="Bacteria"/>
</dbReference>
<dbReference type="HOGENOM" id="CLU_037562_3_1_4"/>
<dbReference type="OrthoDB" id="9793353at2"/>
<dbReference type="Proteomes" id="UP000001983">
    <property type="component" value="Chromosome"/>
</dbReference>
<dbReference type="GO" id="GO:1990904">
    <property type="term" value="C:ribonucleoprotein complex"/>
    <property type="evidence" value="ECO:0007669"/>
    <property type="project" value="UniProtKB-KW"/>
</dbReference>
<dbReference type="GO" id="GO:0005840">
    <property type="term" value="C:ribosome"/>
    <property type="evidence" value="ECO:0007669"/>
    <property type="project" value="UniProtKB-KW"/>
</dbReference>
<dbReference type="GO" id="GO:0019843">
    <property type="term" value="F:rRNA binding"/>
    <property type="evidence" value="ECO:0007669"/>
    <property type="project" value="UniProtKB-UniRule"/>
</dbReference>
<dbReference type="GO" id="GO:0003735">
    <property type="term" value="F:structural constituent of ribosome"/>
    <property type="evidence" value="ECO:0007669"/>
    <property type="project" value="InterPro"/>
</dbReference>
<dbReference type="GO" id="GO:0006412">
    <property type="term" value="P:translation"/>
    <property type="evidence" value="ECO:0007669"/>
    <property type="project" value="UniProtKB-UniRule"/>
</dbReference>
<dbReference type="FunFam" id="3.30.70.330:FF:000001">
    <property type="entry name" value="50S ribosomal protein L23"/>
    <property type="match status" value="1"/>
</dbReference>
<dbReference type="Gene3D" id="3.30.70.330">
    <property type="match status" value="1"/>
</dbReference>
<dbReference type="HAMAP" id="MF_01369_B">
    <property type="entry name" value="Ribosomal_uL23_B"/>
    <property type="match status" value="1"/>
</dbReference>
<dbReference type="InterPro" id="IPR012677">
    <property type="entry name" value="Nucleotide-bd_a/b_plait_sf"/>
</dbReference>
<dbReference type="InterPro" id="IPR013025">
    <property type="entry name" value="Ribosomal_uL23-like"/>
</dbReference>
<dbReference type="InterPro" id="IPR012678">
    <property type="entry name" value="Ribosomal_uL23/eL15/eS24_sf"/>
</dbReference>
<dbReference type="NCBIfam" id="NF004359">
    <property type="entry name" value="PRK05738.1-3"/>
    <property type="match status" value="1"/>
</dbReference>
<dbReference type="NCBIfam" id="NF004363">
    <property type="entry name" value="PRK05738.2-4"/>
    <property type="match status" value="1"/>
</dbReference>
<dbReference type="PANTHER" id="PTHR11620">
    <property type="entry name" value="60S RIBOSOMAL PROTEIN L23A"/>
    <property type="match status" value="1"/>
</dbReference>
<dbReference type="Pfam" id="PF00276">
    <property type="entry name" value="Ribosomal_L23"/>
    <property type="match status" value="1"/>
</dbReference>
<dbReference type="SUPFAM" id="SSF54189">
    <property type="entry name" value="Ribosomal proteins S24e, L23 and L15e"/>
    <property type="match status" value="1"/>
</dbReference>
<evidence type="ECO:0000255" key="1">
    <source>
        <dbReference type="HAMAP-Rule" id="MF_01369"/>
    </source>
</evidence>
<evidence type="ECO:0000305" key="2"/>
<feature type="chain" id="PRO_0000272795" description="Large ribosomal subunit protein uL23">
    <location>
        <begin position="1"/>
        <end position="108"/>
    </location>
</feature>
<sequence length="108" mass="11815">MSAVNSKTKFDEGRLMQVLVAPIVSEKATMIADKTNAVTFKVLQDATKFEIKAAVQLMFKVDVQSVAVLNIKGKTKRFGKSVGRRDNIRKAYVTLKPGQELNLGGESA</sequence>
<reference key="1">
    <citation type="journal article" date="2008" name="Appl. Environ. Microbiol.">
        <title>The genome of Polaromonas sp. strain JS666: insights into the evolution of a hydrocarbon- and xenobiotic-degrading bacterium, and features of relevance to biotechnology.</title>
        <authorList>
            <person name="Mattes T.E."/>
            <person name="Alexander A.K."/>
            <person name="Richardson P.M."/>
            <person name="Munk A.C."/>
            <person name="Han C.S."/>
            <person name="Stothard P."/>
            <person name="Coleman N.V."/>
        </authorList>
    </citation>
    <scope>NUCLEOTIDE SEQUENCE [LARGE SCALE GENOMIC DNA]</scope>
    <source>
        <strain>JS666 / ATCC BAA-500</strain>
    </source>
</reference>